<gene>
    <name evidence="1" type="primary">dcd</name>
    <name type="ordered locus">Kcr_0133</name>
</gene>
<evidence type="ECO:0000255" key="1">
    <source>
        <dbReference type="HAMAP-Rule" id="MF_00146"/>
    </source>
</evidence>
<feature type="chain" id="PRO_1000117975" description="dCTP deaminase">
    <location>
        <begin position="1"/>
        <end position="177"/>
    </location>
</feature>
<feature type="active site" description="Proton donor/acceptor" evidence="1">
    <location>
        <position position="126"/>
    </location>
</feature>
<feature type="binding site" evidence="1">
    <location>
        <begin position="100"/>
        <end position="105"/>
    </location>
    <ligand>
        <name>dCTP</name>
        <dbReference type="ChEBI" id="CHEBI:61481"/>
    </ligand>
</feature>
<feature type="binding site" evidence="1">
    <location>
        <position position="116"/>
    </location>
    <ligand>
        <name>dCTP</name>
        <dbReference type="ChEBI" id="CHEBI:61481"/>
    </ligand>
</feature>
<feature type="binding site" evidence="1">
    <location>
        <position position="159"/>
    </location>
    <ligand>
        <name>dCTP</name>
        <dbReference type="ChEBI" id="CHEBI:61481"/>
    </ligand>
</feature>
<feature type="binding site" evidence="1">
    <location>
        <position position="166"/>
    </location>
    <ligand>
        <name>dCTP</name>
        <dbReference type="ChEBI" id="CHEBI:61481"/>
    </ligand>
</feature>
<keyword id="KW-0378">Hydrolase</keyword>
<keyword id="KW-0546">Nucleotide metabolism</keyword>
<keyword id="KW-0547">Nucleotide-binding</keyword>
<keyword id="KW-1185">Reference proteome</keyword>
<reference key="1">
    <citation type="journal article" date="2008" name="Proc. Natl. Acad. Sci. U.S.A.">
        <title>A korarchaeal genome reveals new insights into the evolution of the Archaea.</title>
        <authorList>
            <person name="Elkins J.G."/>
            <person name="Podar M."/>
            <person name="Graham D.E."/>
            <person name="Makarova K.S."/>
            <person name="Wolf Y."/>
            <person name="Randau L."/>
            <person name="Hedlund B.P."/>
            <person name="Brochier-Armanet C."/>
            <person name="Kunin V."/>
            <person name="Anderson I."/>
            <person name="Lapidus A."/>
            <person name="Goltsman E."/>
            <person name="Barry K."/>
            <person name="Koonin E.V."/>
            <person name="Hugenholtz P."/>
            <person name="Kyrpides N."/>
            <person name="Wanner G."/>
            <person name="Richardson P."/>
            <person name="Keller M."/>
            <person name="Stetter K.O."/>
        </authorList>
    </citation>
    <scope>NUCLEOTIDE SEQUENCE [LARGE SCALE GENOMIC DNA]</scope>
    <source>
        <strain>OPF8</strain>
    </source>
</reference>
<protein>
    <recommendedName>
        <fullName evidence="1">dCTP deaminase</fullName>
        <ecNumber evidence="1">3.5.4.13</ecNumber>
    </recommendedName>
    <alternativeName>
        <fullName evidence="1">Deoxycytidine triphosphate deaminase</fullName>
    </alternativeName>
</protein>
<accession>B1L7R6</accession>
<dbReference type="EC" id="3.5.4.13" evidence="1"/>
<dbReference type="EMBL" id="CP000968">
    <property type="protein sequence ID" value="ACB06893.1"/>
    <property type="molecule type" value="Genomic_DNA"/>
</dbReference>
<dbReference type="RefSeq" id="WP_012308790.1">
    <property type="nucleotide sequence ID" value="NC_010482.1"/>
</dbReference>
<dbReference type="SMR" id="B1L7R6"/>
<dbReference type="FunCoup" id="B1L7R6">
    <property type="interactions" value="12"/>
</dbReference>
<dbReference type="STRING" id="374847.Kcr_0133"/>
<dbReference type="EnsemblBacteria" id="ACB06893">
    <property type="protein sequence ID" value="ACB06893"/>
    <property type="gene ID" value="Kcr_0133"/>
</dbReference>
<dbReference type="GeneID" id="6093422"/>
<dbReference type="KEGG" id="kcr:Kcr_0133"/>
<dbReference type="eggNOG" id="arCOG04048">
    <property type="taxonomic scope" value="Archaea"/>
</dbReference>
<dbReference type="HOGENOM" id="CLU_087476_3_0_2"/>
<dbReference type="InParanoid" id="B1L7R6"/>
<dbReference type="OrthoDB" id="33242at2157"/>
<dbReference type="PhylomeDB" id="B1L7R6"/>
<dbReference type="UniPathway" id="UPA00610">
    <property type="reaction ID" value="UER00665"/>
</dbReference>
<dbReference type="Proteomes" id="UP000001686">
    <property type="component" value="Chromosome"/>
</dbReference>
<dbReference type="GO" id="GO:0008829">
    <property type="term" value="F:dCTP deaminase activity"/>
    <property type="evidence" value="ECO:0007669"/>
    <property type="project" value="UniProtKB-UniRule"/>
</dbReference>
<dbReference type="GO" id="GO:0000166">
    <property type="term" value="F:nucleotide binding"/>
    <property type="evidence" value="ECO:0007669"/>
    <property type="project" value="UniProtKB-KW"/>
</dbReference>
<dbReference type="GO" id="GO:0006226">
    <property type="term" value="P:dUMP biosynthetic process"/>
    <property type="evidence" value="ECO:0007669"/>
    <property type="project" value="UniProtKB-UniPathway"/>
</dbReference>
<dbReference type="GO" id="GO:0006229">
    <property type="term" value="P:dUTP biosynthetic process"/>
    <property type="evidence" value="ECO:0007669"/>
    <property type="project" value="UniProtKB-UniRule"/>
</dbReference>
<dbReference type="CDD" id="cd07557">
    <property type="entry name" value="trimeric_dUTPase"/>
    <property type="match status" value="1"/>
</dbReference>
<dbReference type="Gene3D" id="2.70.40.10">
    <property type="match status" value="1"/>
</dbReference>
<dbReference type="HAMAP" id="MF_00146">
    <property type="entry name" value="dCTP_deaminase"/>
    <property type="match status" value="1"/>
</dbReference>
<dbReference type="InterPro" id="IPR011962">
    <property type="entry name" value="dCTP_deaminase"/>
</dbReference>
<dbReference type="InterPro" id="IPR036157">
    <property type="entry name" value="dUTPase-like_sf"/>
</dbReference>
<dbReference type="InterPro" id="IPR033704">
    <property type="entry name" value="dUTPase_trimeric"/>
</dbReference>
<dbReference type="NCBIfam" id="TIGR02274">
    <property type="entry name" value="dCTP_deam"/>
    <property type="match status" value="1"/>
</dbReference>
<dbReference type="PANTHER" id="PTHR42680">
    <property type="entry name" value="DCTP DEAMINASE"/>
    <property type="match status" value="1"/>
</dbReference>
<dbReference type="PANTHER" id="PTHR42680:SF3">
    <property type="entry name" value="DCTP DEAMINASE"/>
    <property type="match status" value="1"/>
</dbReference>
<dbReference type="Pfam" id="PF22769">
    <property type="entry name" value="DCD"/>
    <property type="match status" value="1"/>
</dbReference>
<dbReference type="SUPFAM" id="SSF51283">
    <property type="entry name" value="dUTPase-like"/>
    <property type="match status" value="1"/>
</dbReference>
<proteinExistence type="inferred from homology"/>
<sequence>MLLSDKAIRSLIREGKLIIDPLYEDSIRENGVDMRIGPEIAFPIVRGEVMDPTKDDPSLHFTVRRFSDEGIIIPGNTSILLVTEEYIKMPDDVAALCGLRSSIARWGFIAAPTLVDAGFEGQLTIEVMWTRPAPVRLYRGIRFLHVVFFRTEGKVERPYSGAYQGQRGVTLPKRLEK</sequence>
<name>DCD_KORCO</name>
<comment type="function">
    <text evidence="1">Catalyzes the deamination of dCTP to dUTP.</text>
</comment>
<comment type="catalytic activity">
    <reaction evidence="1">
        <text>dCTP + H2O + H(+) = dUTP + NH4(+)</text>
        <dbReference type="Rhea" id="RHEA:22680"/>
        <dbReference type="ChEBI" id="CHEBI:15377"/>
        <dbReference type="ChEBI" id="CHEBI:15378"/>
        <dbReference type="ChEBI" id="CHEBI:28938"/>
        <dbReference type="ChEBI" id="CHEBI:61481"/>
        <dbReference type="ChEBI" id="CHEBI:61555"/>
        <dbReference type="EC" id="3.5.4.13"/>
    </reaction>
</comment>
<comment type="pathway">
    <text evidence="1">Pyrimidine metabolism; dUMP biosynthesis; dUMP from dCTP (dUTP route): step 1/2.</text>
</comment>
<comment type="subunit">
    <text evidence="1">Homotrimer.</text>
</comment>
<comment type="similarity">
    <text evidence="1">Belongs to the dCTP deaminase family.</text>
</comment>
<organism>
    <name type="scientific">Korarchaeum cryptofilum (strain OPF8)</name>
    <dbReference type="NCBI Taxonomy" id="374847"/>
    <lineage>
        <taxon>Archaea</taxon>
        <taxon>Thermoproteota</taxon>
        <taxon>Candidatus Korarchaeia</taxon>
        <taxon>Candidatus Korarchaeales</taxon>
        <taxon>Candidatus Korarchaeaceae</taxon>
        <taxon>Candidatus Korarchaeum</taxon>
    </lineage>
</organism>